<protein>
    <recommendedName>
        <fullName evidence="1">Acetyl-coenzyme A synthetase</fullName>
        <shortName evidence="1">AcCoA synthetase</shortName>
        <shortName evidence="1">Acs</shortName>
        <ecNumber evidence="1">6.2.1.1</ecNumber>
    </recommendedName>
    <alternativeName>
        <fullName evidence="1">Acetate--CoA ligase</fullName>
    </alternativeName>
    <alternativeName>
        <fullName evidence="1">Acyl-activating enzyme</fullName>
    </alternativeName>
</protein>
<proteinExistence type="inferred from homology"/>
<comment type="function">
    <text evidence="1">Catalyzes the conversion of acetate into acetyl-CoA (AcCoA), an essential intermediate at the junction of anabolic and catabolic pathways. AcsA undergoes a two-step reaction. In the first half reaction, AcsA combines acetate with ATP to form acetyl-adenylate (AcAMP) intermediate. In the second half reaction, it can then transfer the acetyl group from AcAMP to the sulfhydryl group of CoA, forming the product AcCoA.</text>
</comment>
<comment type="catalytic activity">
    <reaction evidence="1">
        <text>acetate + ATP + CoA = acetyl-CoA + AMP + diphosphate</text>
        <dbReference type="Rhea" id="RHEA:23176"/>
        <dbReference type="ChEBI" id="CHEBI:30089"/>
        <dbReference type="ChEBI" id="CHEBI:30616"/>
        <dbReference type="ChEBI" id="CHEBI:33019"/>
        <dbReference type="ChEBI" id="CHEBI:57287"/>
        <dbReference type="ChEBI" id="CHEBI:57288"/>
        <dbReference type="ChEBI" id="CHEBI:456215"/>
        <dbReference type="EC" id="6.2.1.1"/>
    </reaction>
</comment>
<comment type="cofactor">
    <cofactor evidence="1">
        <name>Mg(2+)</name>
        <dbReference type="ChEBI" id="CHEBI:18420"/>
    </cofactor>
</comment>
<comment type="PTM">
    <text evidence="1">Acetylated. Deacetylation by the SIR2-homolog deacetylase activates the enzyme.</text>
</comment>
<comment type="similarity">
    <text evidence="1">Belongs to the ATP-dependent AMP-binding enzyme family.</text>
</comment>
<sequence>MSEKVIDVQDAWRERALIDDAKYKEMYAASVSDPETFWAEHGRRIDWSTPFSKVKNTSFAPGNVSIKWFEDGKTNVALNCIDRHLETRGDQTAIIWEGDDPNESQHITYKQLHAEVCRMANVLRNRGVGKGDRVTLYLPMIPEAAYAMLACARLGAIHAIVFGGFSPDSLASRIKGCGSKLVITADEGLRGGRKVPLKANVDEAIKRLDADLVDHVIVVKRTGGNVAMEPGRDVYYHEAAEQVTDECPAEAVEAEHPLFILYTSGSTGQPKGVVHTTGGYLVYASMTHQYVFDYHDGDVYWCTADVGWVTGHSYIVYGPLANGATTLMFEGIPTYPSNSRFWEVIDKHKVNIFYTAPTAIRSLMGGGEGPVKKTSRASLRVLGSVGEPINPEAWDWYYRVVGDSRCSIVDTWWQTETGGILITPLPGATKLKPGSATRPFFGVQPVMVDAEGKELDGACEGNLCIKDSWPGQMRTVYGDHERFEQTYFSTYKNLYFTGDGARRDADGYYWITGRVDDVINVSGHRMGTAEVESSLVAHPKVSEAAVVGYPHNVKGQGIYAYVTLNEGEDGSDELRKELVTWVRKDIGPIASPDLIQFAPGLPKTRSGKIMRRILRKIAEDDFGSLGDTSTLAEPAVVDDLIENRQNRSA</sequence>
<evidence type="ECO:0000255" key="1">
    <source>
        <dbReference type="HAMAP-Rule" id="MF_01123"/>
    </source>
</evidence>
<gene>
    <name evidence="1" type="primary">acsA</name>
    <name type="ordered locus">Mpop_2494</name>
</gene>
<name>ACSA_METPB</name>
<feature type="chain" id="PRO_1000137268" description="Acetyl-coenzyme A synthetase">
    <location>
        <begin position="1"/>
        <end position="649"/>
    </location>
</feature>
<feature type="binding site" evidence="1">
    <location>
        <begin position="190"/>
        <end position="193"/>
    </location>
    <ligand>
        <name>CoA</name>
        <dbReference type="ChEBI" id="CHEBI:57287"/>
    </ligand>
</feature>
<feature type="binding site" evidence="1">
    <location>
        <position position="310"/>
    </location>
    <ligand>
        <name>CoA</name>
        <dbReference type="ChEBI" id="CHEBI:57287"/>
    </ligand>
</feature>
<feature type="binding site" evidence="1">
    <location>
        <begin position="386"/>
        <end position="388"/>
    </location>
    <ligand>
        <name>ATP</name>
        <dbReference type="ChEBI" id="CHEBI:30616"/>
    </ligand>
</feature>
<feature type="binding site" evidence="1">
    <location>
        <begin position="410"/>
        <end position="415"/>
    </location>
    <ligand>
        <name>ATP</name>
        <dbReference type="ChEBI" id="CHEBI:30616"/>
    </ligand>
</feature>
<feature type="binding site" evidence="1">
    <location>
        <position position="499"/>
    </location>
    <ligand>
        <name>ATP</name>
        <dbReference type="ChEBI" id="CHEBI:30616"/>
    </ligand>
</feature>
<feature type="binding site" evidence="1">
    <location>
        <position position="514"/>
    </location>
    <ligand>
        <name>ATP</name>
        <dbReference type="ChEBI" id="CHEBI:30616"/>
    </ligand>
</feature>
<feature type="binding site" evidence="1">
    <location>
        <position position="522"/>
    </location>
    <ligand>
        <name>CoA</name>
        <dbReference type="ChEBI" id="CHEBI:57287"/>
    </ligand>
</feature>
<feature type="binding site" evidence="1">
    <location>
        <position position="525"/>
    </location>
    <ligand>
        <name>ATP</name>
        <dbReference type="ChEBI" id="CHEBI:30616"/>
    </ligand>
</feature>
<feature type="binding site" evidence="1">
    <location>
        <position position="536"/>
    </location>
    <ligand>
        <name>Mg(2+)</name>
        <dbReference type="ChEBI" id="CHEBI:18420"/>
    </ligand>
</feature>
<feature type="binding site" evidence="1">
    <location>
        <position position="538"/>
    </location>
    <ligand>
        <name>Mg(2+)</name>
        <dbReference type="ChEBI" id="CHEBI:18420"/>
    </ligand>
</feature>
<feature type="binding site" evidence="1">
    <location>
        <position position="541"/>
    </location>
    <ligand>
        <name>Mg(2+)</name>
        <dbReference type="ChEBI" id="CHEBI:18420"/>
    </ligand>
</feature>
<feature type="binding site" evidence="1">
    <location>
        <position position="583"/>
    </location>
    <ligand>
        <name>CoA</name>
        <dbReference type="ChEBI" id="CHEBI:57287"/>
    </ligand>
</feature>
<feature type="modified residue" description="N6-acetyllysine" evidence="1">
    <location>
        <position position="608"/>
    </location>
</feature>
<organism>
    <name type="scientific">Methylorubrum populi (strain ATCC BAA-705 / NCIMB 13946 / BJ001)</name>
    <name type="common">Methylobacterium populi</name>
    <dbReference type="NCBI Taxonomy" id="441620"/>
    <lineage>
        <taxon>Bacteria</taxon>
        <taxon>Pseudomonadati</taxon>
        <taxon>Pseudomonadota</taxon>
        <taxon>Alphaproteobacteria</taxon>
        <taxon>Hyphomicrobiales</taxon>
        <taxon>Methylobacteriaceae</taxon>
        <taxon>Methylorubrum</taxon>
    </lineage>
</organism>
<reference key="1">
    <citation type="submission" date="2008-04" db="EMBL/GenBank/DDBJ databases">
        <title>Complete sequence of chromosome of Methylobacterium populi BJ001.</title>
        <authorList>
            <consortium name="US DOE Joint Genome Institute"/>
            <person name="Copeland A."/>
            <person name="Lucas S."/>
            <person name="Lapidus A."/>
            <person name="Glavina del Rio T."/>
            <person name="Dalin E."/>
            <person name="Tice H."/>
            <person name="Bruce D."/>
            <person name="Goodwin L."/>
            <person name="Pitluck S."/>
            <person name="Chertkov O."/>
            <person name="Brettin T."/>
            <person name="Detter J.C."/>
            <person name="Han C."/>
            <person name="Kuske C.R."/>
            <person name="Schmutz J."/>
            <person name="Larimer F."/>
            <person name="Land M."/>
            <person name="Hauser L."/>
            <person name="Kyrpides N."/>
            <person name="Mikhailova N."/>
            <person name="Marx C."/>
            <person name="Richardson P."/>
        </authorList>
    </citation>
    <scope>NUCLEOTIDE SEQUENCE [LARGE SCALE GENOMIC DNA]</scope>
    <source>
        <strain>ATCC BAA-705 / NCIMB 13946 / BJ001</strain>
    </source>
</reference>
<accession>B1ZB59</accession>
<dbReference type="EC" id="6.2.1.1" evidence="1"/>
<dbReference type="EMBL" id="CP001029">
    <property type="protein sequence ID" value="ACB80655.1"/>
    <property type="molecule type" value="Genomic_DNA"/>
</dbReference>
<dbReference type="RefSeq" id="WP_012454385.1">
    <property type="nucleotide sequence ID" value="NC_010725.1"/>
</dbReference>
<dbReference type="SMR" id="B1ZB59"/>
<dbReference type="STRING" id="441620.Mpop_2494"/>
<dbReference type="KEGG" id="mpo:Mpop_2494"/>
<dbReference type="eggNOG" id="COG0365">
    <property type="taxonomic scope" value="Bacteria"/>
</dbReference>
<dbReference type="HOGENOM" id="CLU_000022_3_6_5"/>
<dbReference type="OrthoDB" id="9803968at2"/>
<dbReference type="Proteomes" id="UP000007136">
    <property type="component" value="Chromosome"/>
</dbReference>
<dbReference type="GO" id="GO:0005829">
    <property type="term" value="C:cytosol"/>
    <property type="evidence" value="ECO:0007669"/>
    <property type="project" value="TreeGrafter"/>
</dbReference>
<dbReference type="GO" id="GO:0003987">
    <property type="term" value="F:acetate-CoA ligase activity"/>
    <property type="evidence" value="ECO:0007669"/>
    <property type="project" value="UniProtKB-UniRule"/>
</dbReference>
<dbReference type="GO" id="GO:0016208">
    <property type="term" value="F:AMP binding"/>
    <property type="evidence" value="ECO:0007669"/>
    <property type="project" value="InterPro"/>
</dbReference>
<dbReference type="GO" id="GO:0005524">
    <property type="term" value="F:ATP binding"/>
    <property type="evidence" value="ECO:0007669"/>
    <property type="project" value="UniProtKB-KW"/>
</dbReference>
<dbReference type="GO" id="GO:0046872">
    <property type="term" value="F:metal ion binding"/>
    <property type="evidence" value="ECO:0007669"/>
    <property type="project" value="UniProtKB-KW"/>
</dbReference>
<dbReference type="GO" id="GO:0019427">
    <property type="term" value="P:acetyl-CoA biosynthetic process from acetate"/>
    <property type="evidence" value="ECO:0007669"/>
    <property type="project" value="InterPro"/>
</dbReference>
<dbReference type="CDD" id="cd05966">
    <property type="entry name" value="ACS"/>
    <property type="match status" value="1"/>
</dbReference>
<dbReference type="FunFam" id="3.30.300.30:FF:000004">
    <property type="entry name" value="Acetyl-coenzyme A synthetase"/>
    <property type="match status" value="1"/>
</dbReference>
<dbReference type="FunFam" id="3.40.50.12780:FF:000001">
    <property type="entry name" value="Acetyl-coenzyme A synthetase"/>
    <property type="match status" value="1"/>
</dbReference>
<dbReference type="Gene3D" id="3.30.300.30">
    <property type="match status" value="1"/>
</dbReference>
<dbReference type="Gene3D" id="3.40.50.12780">
    <property type="entry name" value="N-terminal domain of ligase-like"/>
    <property type="match status" value="1"/>
</dbReference>
<dbReference type="HAMAP" id="MF_01123">
    <property type="entry name" value="Ac_CoA_synth"/>
    <property type="match status" value="1"/>
</dbReference>
<dbReference type="InterPro" id="IPR011904">
    <property type="entry name" value="Ac_CoA_lig"/>
</dbReference>
<dbReference type="InterPro" id="IPR032387">
    <property type="entry name" value="ACAS_N"/>
</dbReference>
<dbReference type="InterPro" id="IPR025110">
    <property type="entry name" value="AMP-bd_C"/>
</dbReference>
<dbReference type="InterPro" id="IPR045851">
    <property type="entry name" value="AMP-bd_C_sf"/>
</dbReference>
<dbReference type="InterPro" id="IPR020845">
    <property type="entry name" value="AMP-binding_CS"/>
</dbReference>
<dbReference type="InterPro" id="IPR000873">
    <property type="entry name" value="AMP-dep_synth/lig_dom"/>
</dbReference>
<dbReference type="InterPro" id="IPR042099">
    <property type="entry name" value="ANL_N_sf"/>
</dbReference>
<dbReference type="NCBIfam" id="TIGR02188">
    <property type="entry name" value="Ac_CoA_lig_AcsA"/>
    <property type="match status" value="1"/>
</dbReference>
<dbReference type="NCBIfam" id="NF001208">
    <property type="entry name" value="PRK00174.1"/>
    <property type="match status" value="1"/>
</dbReference>
<dbReference type="PANTHER" id="PTHR24095">
    <property type="entry name" value="ACETYL-COENZYME A SYNTHETASE"/>
    <property type="match status" value="1"/>
</dbReference>
<dbReference type="PANTHER" id="PTHR24095:SF14">
    <property type="entry name" value="ACETYL-COENZYME A SYNTHETASE 1"/>
    <property type="match status" value="1"/>
</dbReference>
<dbReference type="Pfam" id="PF16177">
    <property type="entry name" value="ACAS_N"/>
    <property type="match status" value="1"/>
</dbReference>
<dbReference type="Pfam" id="PF00501">
    <property type="entry name" value="AMP-binding"/>
    <property type="match status" value="1"/>
</dbReference>
<dbReference type="Pfam" id="PF13193">
    <property type="entry name" value="AMP-binding_C"/>
    <property type="match status" value="1"/>
</dbReference>
<dbReference type="SUPFAM" id="SSF56801">
    <property type="entry name" value="Acetyl-CoA synthetase-like"/>
    <property type="match status" value="1"/>
</dbReference>
<dbReference type="PROSITE" id="PS00455">
    <property type="entry name" value="AMP_BINDING"/>
    <property type="match status" value="1"/>
</dbReference>
<keyword id="KW-0007">Acetylation</keyword>
<keyword id="KW-0067">ATP-binding</keyword>
<keyword id="KW-0436">Ligase</keyword>
<keyword id="KW-0460">Magnesium</keyword>
<keyword id="KW-0479">Metal-binding</keyword>
<keyword id="KW-0547">Nucleotide-binding</keyword>